<keyword id="KW-0963">Cytoplasm</keyword>
<keyword id="KW-0489">Methyltransferase</keyword>
<keyword id="KW-0698">rRNA processing</keyword>
<keyword id="KW-0949">S-adenosyl-L-methionine</keyword>
<keyword id="KW-0808">Transferase</keyword>
<sequence>MNIQIITVGKLKEKYLVQGIAEYLKRLTAYAKVTIVEVPDEKAPEVLSDAEMKQVKDKEGVRILAKIPDDTHVIALAIDGKMKSSEEFAADLDKLATYGKSKVAFVIGGSLGLSESVLKRSDEQISFGRLTLPHQLMRLVLVEQVYRAFRIVRGEPYHK</sequence>
<name>RLMH_LISW6</name>
<dbReference type="EC" id="2.1.1.177" evidence="1"/>
<dbReference type="EMBL" id="AM263198">
    <property type="protein sequence ID" value="CAK19688.1"/>
    <property type="molecule type" value="Genomic_DNA"/>
</dbReference>
<dbReference type="RefSeq" id="WP_011701128.1">
    <property type="nucleotide sequence ID" value="NC_008555.1"/>
</dbReference>
<dbReference type="SMR" id="A0AFA6"/>
<dbReference type="STRING" id="386043.lwe0270"/>
<dbReference type="GeneID" id="61188163"/>
<dbReference type="KEGG" id="lwe:lwe0270"/>
<dbReference type="eggNOG" id="COG1576">
    <property type="taxonomic scope" value="Bacteria"/>
</dbReference>
<dbReference type="HOGENOM" id="CLU_100552_0_0_9"/>
<dbReference type="OrthoDB" id="9806643at2"/>
<dbReference type="Proteomes" id="UP000000779">
    <property type="component" value="Chromosome"/>
</dbReference>
<dbReference type="GO" id="GO:0005737">
    <property type="term" value="C:cytoplasm"/>
    <property type="evidence" value="ECO:0007669"/>
    <property type="project" value="UniProtKB-SubCell"/>
</dbReference>
<dbReference type="GO" id="GO:0070038">
    <property type="term" value="F:rRNA (pseudouridine-N3-)-methyltransferase activity"/>
    <property type="evidence" value="ECO:0007669"/>
    <property type="project" value="UniProtKB-UniRule"/>
</dbReference>
<dbReference type="CDD" id="cd18081">
    <property type="entry name" value="RlmH-like"/>
    <property type="match status" value="1"/>
</dbReference>
<dbReference type="Gene3D" id="3.40.1280.10">
    <property type="match status" value="1"/>
</dbReference>
<dbReference type="HAMAP" id="MF_00658">
    <property type="entry name" value="23SrRNA_methyltr_H"/>
    <property type="match status" value="1"/>
</dbReference>
<dbReference type="InterPro" id="IPR029028">
    <property type="entry name" value="Alpha/beta_knot_MTases"/>
</dbReference>
<dbReference type="InterPro" id="IPR003742">
    <property type="entry name" value="RlmH-like"/>
</dbReference>
<dbReference type="InterPro" id="IPR029026">
    <property type="entry name" value="tRNA_m1G_MTases_N"/>
</dbReference>
<dbReference type="NCBIfam" id="NF000985">
    <property type="entry name" value="PRK00103.1-3"/>
    <property type="match status" value="1"/>
</dbReference>
<dbReference type="NCBIfam" id="TIGR00246">
    <property type="entry name" value="tRNA_RlmH_YbeA"/>
    <property type="match status" value="1"/>
</dbReference>
<dbReference type="PANTHER" id="PTHR33603">
    <property type="entry name" value="METHYLTRANSFERASE"/>
    <property type="match status" value="1"/>
</dbReference>
<dbReference type="PANTHER" id="PTHR33603:SF1">
    <property type="entry name" value="RIBOSOMAL RNA LARGE SUBUNIT METHYLTRANSFERASE H"/>
    <property type="match status" value="1"/>
</dbReference>
<dbReference type="Pfam" id="PF02590">
    <property type="entry name" value="SPOUT_MTase"/>
    <property type="match status" value="1"/>
</dbReference>
<dbReference type="PIRSF" id="PIRSF004505">
    <property type="entry name" value="MT_bac"/>
    <property type="match status" value="1"/>
</dbReference>
<dbReference type="SUPFAM" id="SSF75217">
    <property type="entry name" value="alpha/beta knot"/>
    <property type="match status" value="1"/>
</dbReference>
<gene>
    <name evidence="1" type="primary">rlmH</name>
    <name type="ordered locus">lwe0270</name>
</gene>
<evidence type="ECO:0000255" key="1">
    <source>
        <dbReference type="HAMAP-Rule" id="MF_00658"/>
    </source>
</evidence>
<feature type="chain" id="PRO_1000061802" description="Ribosomal RNA large subunit methyltransferase H">
    <location>
        <begin position="1"/>
        <end position="159"/>
    </location>
</feature>
<feature type="binding site" evidence="1">
    <location>
        <position position="76"/>
    </location>
    <ligand>
        <name>S-adenosyl-L-methionine</name>
        <dbReference type="ChEBI" id="CHEBI:59789"/>
    </ligand>
</feature>
<feature type="binding site" evidence="1">
    <location>
        <position position="108"/>
    </location>
    <ligand>
        <name>S-adenosyl-L-methionine</name>
        <dbReference type="ChEBI" id="CHEBI:59789"/>
    </ligand>
</feature>
<feature type="binding site" evidence="1">
    <location>
        <begin position="127"/>
        <end position="132"/>
    </location>
    <ligand>
        <name>S-adenosyl-L-methionine</name>
        <dbReference type="ChEBI" id="CHEBI:59789"/>
    </ligand>
</feature>
<accession>A0AFA6</accession>
<protein>
    <recommendedName>
        <fullName evidence="1">Ribosomal RNA large subunit methyltransferase H</fullName>
        <ecNumber evidence="1">2.1.1.177</ecNumber>
    </recommendedName>
    <alternativeName>
        <fullName evidence="1">23S rRNA (pseudouridine1915-N3)-methyltransferase</fullName>
    </alternativeName>
    <alternativeName>
        <fullName evidence="1">23S rRNA m3Psi1915 methyltransferase</fullName>
    </alternativeName>
    <alternativeName>
        <fullName evidence="1">rRNA (pseudouridine-N3-)-methyltransferase RlmH</fullName>
    </alternativeName>
</protein>
<reference key="1">
    <citation type="journal article" date="2006" name="J. Bacteriol.">
        <title>Whole-genome sequence of Listeria welshimeri reveals common steps in genome reduction with Listeria innocua as compared to Listeria monocytogenes.</title>
        <authorList>
            <person name="Hain T."/>
            <person name="Steinweg C."/>
            <person name="Kuenne C.T."/>
            <person name="Billion A."/>
            <person name="Ghai R."/>
            <person name="Chatterjee S.S."/>
            <person name="Domann E."/>
            <person name="Kaerst U."/>
            <person name="Goesmann A."/>
            <person name="Bekel T."/>
            <person name="Bartels D."/>
            <person name="Kaiser O."/>
            <person name="Meyer F."/>
            <person name="Puehler A."/>
            <person name="Weisshaar B."/>
            <person name="Wehland J."/>
            <person name="Liang C."/>
            <person name="Dandekar T."/>
            <person name="Lampidis R."/>
            <person name="Kreft J."/>
            <person name="Goebel W."/>
            <person name="Chakraborty T."/>
        </authorList>
    </citation>
    <scope>NUCLEOTIDE SEQUENCE [LARGE SCALE GENOMIC DNA]</scope>
    <source>
        <strain>ATCC 35897 / DSM 20650 / CCUG 15529 / CIP 8149 / NCTC 11857 / SLCC 5334 / V8</strain>
    </source>
</reference>
<organism>
    <name type="scientific">Listeria welshimeri serovar 6b (strain ATCC 35897 / DSM 20650 / CCUG 15529 / CIP 8149 / NCTC 11857 / SLCC 5334 / V8)</name>
    <dbReference type="NCBI Taxonomy" id="386043"/>
    <lineage>
        <taxon>Bacteria</taxon>
        <taxon>Bacillati</taxon>
        <taxon>Bacillota</taxon>
        <taxon>Bacilli</taxon>
        <taxon>Bacillales</taxon>
        <taxon>Listeriaceae</taxon>
        <taxon>Listeria</taxon>
    </lineage>
</organism>
<comment type="function">
    <text evidence="1">Specifically methylates the pseudouridine at position 1915 (m3Psi1915) in 23S rRNA.</text>
</comment>
<comment type="catalytic activity">
    <reaction evidence="1">
        <text>pseudouridine(1915) in 23S rRNA + S-adenosyl-L-methionine = N(3)-methylpseudouridine(1915) in 23S rRNA + S-adenosyl-L-homocysteine + H(+)</text>
        <dbReference type="Rhea" id="RHEA:42752"/>
        <dbReference type="Rhea" id="RHEA-COMP:10221"/>
        <dbReference type="Rhea" id="RHEA-COMP:10222"/>
        <dbReference type="ChEBI" id="CHEBI:15378"/>
        <dbReference type="ChEBI" id="CHEBI:57856"/>
        <dbReference type="ChEBI" id="CHEBI:59789"/>
        <dbReference type="ChEBI" id="CHEBI:65314"/>
        <dbReference type="ChEBI" id="CHEBI:74486"/>
        <dbReference type="EC" id="2.1.1.177"/>
    </reaction>
</comment>
<comment type="subunit">
    <text evidence="1">Homodimer.</text>
</comment>
<comment type="subcellular location">
    <subcellularLocation>
        <location evidence="1">Cytoplasm</location>
    </subcellularLocation>
</comment>
<comment type="similarity">
    <text evidence="1">Belongs to the RNA methyltransferase RlmH family.</text>
</comment>
<proteinExistence type="inferred from homology"/>